<feature type="signal peptide" evidence="2">
    <location>
        <begin position="1"/>
        <end position="26"/>
    </location>
</feature>
<feature type="chain" id="PRO_0000346449" description="Cell surface glycoprotein CD200 receptor 1">
    <location>
        <begin position="27"/>
        <end position="355"/>
    </location>
</feature>
<feature type="topological domain" description="Extracellular" evidence="2">
    <location>
        <begin position="27"/>
        <end position="267"/>
    </location>
</feature>
<feature type="transmembrane region" description="Helical" evidence="2">
    <location>
        <begin position="268"/>
        <end position="288"/>
    </location>
</feature>
<feature type="topological domain" description="Cytoplasmic" evidence="2">
    <location>
        <begin position="289"/>
        <end position="355"/>
    </location>
</feature>
<feature type="domain" description="Ig-like C2-type">
    <location>
        <begin position="139"/>
        <end position="257"/>
    </location>
</feature>
<feature type="region of interest" description="Disordered" evidence="4">
    <location>
        <begin position="35"/>
        <end position="56"/>
    </location>
</feature>
<feature type="compositionally biased region" description="Polar residues" evidence="4">
    <location>
        <begin position="35"/>
        <end position="55"/>
    </location>
</feature>
<feature type="glycosylation site" description="N-linked (GlcNAc...) asparagine" evidence="2">
    <location>
        <position position="46"/>
    </location>
</feature>
<feature type="glycosylation site" description="N-linked (GlcNAc...) asparagine" evidence="2">
    <location>
        <position position="123"/>
    </location>
</feature>
<feature type="glycosylation site" description="N-linked (GlcNAc...) asparagine" evidence="2">
    <location>
        <position position="153"/>
    </location>
</feature>
<feature type="disulfide bond" evidence="3">
    <location>
        <begin position="85"/>
        <end position="156"/>
    </location>
</feature>
<feature type="disulfide bond" evidence="3">
    <location>
        <begin position="108"/>
        <end position="124"/>
    </location>
</feature>
<feature type="disulfide bond" evidence="3">
    <location>
        <begin position="191"/>
        <end position="241"/>
    </location>
</feature>
<feature type="disulfide bond" evidence="3">
    <location>
        <begin position="210"/>
        <end position="229"/>
    </location>
</feature>
<keyword id="KW-1003">Cell membrane</keyword>
<keyword id="KW-1015">Disulfide bond</keyword>
<keyword id="KW-0325">Glycoprotein</keyword>
<keyword id="KW-0472">Membrane</keyword>
<keyword id="KW-0675">Receptor</keyword>
<keyword id="KW-1185">Reference proteome</keyword>
<keyword id="KW-0732">Signal</keyword>
<keyword id="KW-0812">Transmembrane</keyword>
<keyword id="KW-1133">Transmembrane helix</keyword>
<protein>
    <recommendedName>
        <fullName>Cell surface glycoprotein CD200 receptor 1</fullName>
    </recommendedName>
    <alternativeName>
        <fullName>CD200 cell surface glycoprotein receptor</fullName>
    </alternativeName>
    <alternativeName>
        <fullName>Cell surface glycoprotein OX2 receptor 1</fullName>
    </alternativeName>
</protein>
<organism>
    <name type="scientific">Bos taurus</name>
    <name type="common">Bovine</name>
    <dbReference type="NCBI Taxonomy" id="9913"/>
    <lineage>
        <taxon>Eukaryota</taxon>
        <taxon>Metazoa</taxon>
        <taxon>Chordata</taxon>
        <taxon>Craniata</taxon>
        <taxon>Vertebrata</taxon>
        <taxon>Euteleostomi</taxon>
        <taxon>Mammalia</taxon>
        <taxon>Eutheria</taxon>
        <taxon>Laurasiatheria</taxon>
        <taxon>Artiodactyla</taxon>
        <taxon>Ruminantia</taxon>
        <taxon>Pecora</taxon>
        <taxon>Bovidae</taxon>
        <taxon>Bovinae</taxon>
        <taxon>Bos</taxon>
    </lineage>
</organism>
<name>MO2R1_BOVIN</name>
<dbReference type="EMBL" id="BC140695">
    <property type="protein sequence ID" value="AAI40696.1"/>
    <property type="molecule type" value="mRNA"/>
</dbReference>
<dbReference type="RefSeq" id="NP_001092844.1">
    <property type="nucleotide sequence ID" value="NM_001099374.2"/>
</dbReference>
<dbReference type="SMR" id="A5D7V5"/>
<dbReference type="FunCoup" id="A5D7V5">
    <property type="interactions" value="79"/>
</dbReference>
<dbReference type="STRING" id="9913.ENSBTAP00000001635"/>
<dbReference type="GlyCosmos" id="A5D7V5">
    <property type="glycosylation" value="3 sites, No reported glycans"/>
</dbReference>
<dbReference type="GlyGen" id="A5D7V5">
    <property type="glycosylation" value="3 sites"/>
</dbReference>
<dbReference type="PaxDb" id="9913-ENSBTAP00000001635"/>
<dbReference type="Ensembl" id="ENSBTAT00000001635.7">
    <property type="protein sequence ID" value="ENSBTAP00000001635.5"/>
    <property type="gene ID" value="ENSBTAG00000001235.7"/>
</dbReference>
<dbReference type="GeneID" id="516008"/>
<dbReference type="KEGG" id="bta:516008"/>
<dbReference type="VEuPathDB" id="HostDB:ENSBTAG00000001235"/>
<dbReference type="eggNOG" id="ENOG502SPS1">
    <property type="taxonomic scope" value="Eukaryota"/>
</dbReference>
<dbReference type="GeneTree" id="ENSGT00390000014496"/>
<dbReference type="HOGENOM" id="CLU_069156_0_0_1"/>
<dbReference type="InParanoid" id="A5D7V5"/>
<dbReference type="OMA" id="MKAGTNM"/>
<dbReference type="OrthoDB" id="8915654at2759"/>
<dbReference type="TreeFam" id="TF335960"/>
<dbReference type="Reactome" id="R-BTA-198933">
    <property type="pathway name" value="Immunoregulatory interactions between a Lymphoid and a non-Lymphoid cell"/>
</dbReference>
<dbReference type="Proteomes" id="UP000009136">
    <property type="component" value="Chromosome 1"/>
</dbReference>
<dbReference type="Bgee" id="ENSBTAG00000001235">
    <property type="expression patterns" value="Expressed in monocyte and 85 other cell types or tissues"/>
</dbReference>
<dbReference type="GO" id="GO:0009897">
    <property type="term" value="C:external side of plasma membrane"/>
    <property type="evidence" value="ECO:0000318"/>
    <property type="project" value="GO_Central"/>
</dbReference>
<dbReference type="GO" id="GO:0038023">
    <property type="term" value="F:signaling receptor activity"/>
    <property type="evidence" value="ECO:0000318"/>
    <property type="project" value="GO_Central"/>
</dbReference>
<dbReference type="GO" id="GO:0150077">
    <property type="term" value="P:regulation of neuroinflammatory response"/>
    <property type="evidence" value="ECO:0007669"/>
    <property type="project" value="InterPro"/>
</dbReference>
<dbReference type="FunFam" id="2.60.40.10:FF:000584">
    <property type="entry name" value="Cell surface glycoprotein CD200 receptor 1"/>
    <property type="match status" value="1"/>
</dbReference>
<dbReference type="FunFam" id="2.60.40.10:FF:000769">
    <property type="entry name" value="Cell surface glycoprotein CD200 receptor 1"/>
    <property type="match status" value="1"/>
</dbReference>
<dbReference type="Gene3D" id="2.60.40.10">
    <property type="entry name" value="Immunoglobulins"/>
    <property type="match status" value="2"/>
</dbReference>
<dbReference type="InterPro" id="IPR040012">
    <property type="entry name" value="CD200R"/>
</dbReference>
<dbReference type="InterPro" id="IPR013162">
    <property type="entry name" value="CD80_C2-set"/>
</dbReference>
<dbReference type="InterPro" id="IPR007110">
    <property type="entry name" value="Ig-like_dom"/>
</dbReference>
<dbReference type="InterPro" id="IPR036179">
    <property type="entry name" value="Ig-like_dom_sf"/>
</dbReference>
<dbReference type="InterPro" id="IPR013783">
    <property type="entry name" value="Ig-like_fold"/>
</dbReference>
<dbReference type="InterPro" id="IPR003599">
    <property type="entry name" value="Ig_sub"/>
</dbReference>
<dbReference type="InterPro" id="IPR013106">
    <property type="entry name" value="Ig_V-set"/>
</dbReference>
<dbReference type="PANTHER" id="PTHR21462:SF2">
    <property type="entry name" value="CELL SURFACE GLYCOPROTEIN CD200 RECEPTOR 2"/>
    <property type="match status" value="1"/>
</dbReference>
<dbReference type="PANTHER" id="PTHR21462">
    <property type="entry name" value="CELL SURFACE GLYCOPROTEIN OX2 RECEPTOR PRECURSOR"/>
    <property type="match status" value="1"/>
</dbReference>
<dbReference type="Pfam" id="PF08205">
    <property type="entry name" value="C2-set_2"/>
    <property type="match status" value="1"/>
</dbReference>
<dbReference type="Pfam" id="PF07686">
    <property type="entry name" value="V-set"/>
    <property type="match status" value="1"/>
</dbReference>
<dbReference type="SMART" id="SM00409">
    <property type="entry name" value="IG"/>
    <property type="match status" value="1"/>
</dbReference>
<dbReference type="SUPFAM" id="SSF48726">
    <property type="entry name" value="Immunoglobulin"/>
    <property type="match status" value="2"/>
</dbReference>
<dbReference type="PROSITE" id="PS50835">
    <property type="entry name" value="IG_LIKE"/>
    <property type="match status" value="1"/>
</dbReference>
<comment type="function">
    <text evidence="1">Inhibitory receptor for the CD200/OX2 cell surface glycoprotein. Limits inflammation by inhibiting the expression of pro-inflammatory molecules including TNF-alpha, interferons, and inducible nitric oxide synthase (iNOS) in response to selected stimuli (By similarity).</text>
</comment>
<comment type="subunit">
    <text evidence="1">CD200 and CD200R1 interact via their respective N-terminal Ig-like domains.</text>
</comment>
<comment type="subcellular location">
    <subcellularLocation>
        <location evidence="1">Cell membrane</location>
        <topology evidence="1">Single-pass type I membrane protein</topology>
    </subcellularLocation>
</comment>
<comment type="similarity">
    <text evidence="5">Belongs to the CD200R family.</text>
</comment>
<evidence type="ECO:0000250" key="1"/>
<evidence type="ECO:0000255" key="2"/>
<evidence type="ECO:0000255" key="3">
    <source>
        <dbReference type="PROSITE-ProRule" id="PRU00114"/>
    </source>
</evidence>
<evidence type="ECO:0000256" key="4">
    <source>
        <dbReference type="SAM" id="MobiDB-lite"/>
    </source>
</evidence>
<evidence type="ECO:0000305" key="5"/>
<gene>
    <name type="primary">CD200R1</name>
    <name type="synonym">CD200R</name>
</gene>
<proteinExistence type="evidence at transcript level"/>
<accession>A5D7V5</accession>
<sequence>MPCTWITSDLQLRLILTLFFVAECLSAGMEGTKTSNNSMQQLDNGNHSSVSTTSSTERKQSTVTLYAEVKTSLSVLVDTKAVLTCPPVLWPSVLVVTWEIVLRDKPPCFGAYRRDTNQTTRGNCTDKRITWASRPDENPALQVDPVAITHDGNYTCQIVTSDGNFHHEYHLQVLVPPEVTLIQTEKGTAVCKAAAGKPAAQISWTPEGDCDTEQGPYWGDGTVTVQSTCRWGSRHVLNVSCSVSHLAGNKSLSIQLSQGAEIPAHLKNLYITAPIFIILIVVGSIWLLKISGCRKCKLKKTEHTPVVQEDEMEPYASYTEKNNPLYDITNRVKTSQVLQSEVDGMNLHTIYVPRV</sequence>
<reference key="1">
    <citation type="submission" date="2007-04" db="EMBL/GenBank/DDBJ databases">
        <authorList>
            <consortium name="NIH - Mammalian Gene Collection (MGC) project"/>
        </authorList>
    </citation>
    <scope>NUCLEOTIDE SEQUENCE [LARGE SCALE MRNA]</scope>
    <source>
        <strain>Hereford</strain>
        <tissue>Thymus</tissue>
    </source>
</reference>